<reference key="1">
    <citation type="journal article" date="2005" name="Infect. Immun.">
        <title>Comparative genomic analysis of Chlamydia trachomatis oculotropic and genitotropic strains.</title>
        <authorList>
            <person name="Carlson J.H."/>
            <person name="Porcella S.F."/>
            <person name="McClarty G."/>
            <person name="Caldwell H.D."/>
        </authorList>
    </citation>
    <scope>NUCLEOTIDE SEQUENCE [LARGE SCALE GENOMIC DNA]</scope>
    <source>
        <strain>ATCC VR-571B / DSM 19440 / HAR-13</strain>
    </source>
</reference>
<dbReference type="EC" id="3.1.3.5" evidence="1"/>
<dbReference type="EMBL" id="CP000051">
    <property type="protein sequence ID" value="AAX50478.1"/>
    <property type="molecule type" value="Genomic_DNA"/>
</dbReference>
<dbReference type="RefSeq" id="WP_011324647.1">
    <property type="nucleotide sequence ID" value="NC_007429.1"/>
</dbReference>
<dbReference type="SMR" id="Q3KME4"/>
<dbReference type="KEGG" id="cta:CTA_0238"/>
<dbReference type="HOGENOM" id="CLU_045192_1_0_0"/>
<dbReference type="Proteomes" id="UP000002532">
    <property type="component" value="Chromosome"/>
</dbReference>
<dbReference type="GO" id="GO:0005737">
    <property type="term" value="C:cytoplasm"/>
    <property type="evidence" value="ECO:0007669"/>
    <property type="project" value="UniProtKB-SubCell"/>
</dbReference>
<dbReference type="GO" id="GO:0008254">
    <property type="term" value="F:3'-nucleotidase activity"/>
    <property type="evidence" value="ECO:0007669"/>
    <property type="project" value="TreeGrafter"/>
</dbReference>
<dbReference type="GO" id="GO:0008253">
    <property type="term" value="F:5'-nucleotidase activity"/>
    <property type="evidence" value="ECO:0007669"/>
    <property type="project" value="UniProtKB-UniRule"/>
</dbReference>
<dbReference type="GO" id="GO:0004309">
    <property type="term" value="F:exopolyphosphatase activity"/>
    <property type="evidence" value="ECO:0007669"/>
    <property type="project" value="TreeGrafter"/>
</dbReference>
<dbReference type="GO" id="GO:0046872">
    <property type="term" value="F:metal ion binding"/>
    <property type="evidence" value="ECO:0007669"/>
    <property type="project" value="UniProtKB-UniRule"/>
</dbReference>
<dbReference type="GO" id="GO:0000166">
    <property type="term" value="F:nucleotide binding"/>
    <property type="evidence" value="ECO:0007669"/>
    <property type="project" value="UniProtKB-KW"/>
</dbReference>
<dbReference type="Gene3D" id="3.40.1210.10">
    <property type="entry name" value="Survival protein SurE-like phosphatase/nucleotidase"/>
    <property type="match status" value="1"/>
</dbReference>
<dbReference type="HAMAP" id="MF_00060">
    <property type="entry name" value="SurE"/>
    <property type="match status" value="1"/>
</dbReference>
<dbReference type="InterPro" id="IPR030048">
    <property type="entry name" value="SurE"/>
</dbReference>
<dbReference type="InterPro" id="IPR002828">
    <property type="entry name" value="SurE-like_Pase/nucleotidase"/>
</dbReference>
<dbReference type="InterPro" id="IPR036523">
    <property type="entry name" value="SurE-like_sf"/>
</dbReference>
<dbReference type="NCBIfam" id="NF001493">
    <property type="entry name" value="PRK00346.2-3"/>
    <property type="match status" value="1"/>
</dbReference>
<dbReference type="PANTHER" id="PTHR30457">
    <property type="entry name" value="5'-NUCLEOTIDASE SURE"/>
    <property type="match status" value="1"/>
</dbReference>
<dbReference type="PANTHER" id="PTHR30457:SF12">
    <property type="entry name" value="5'_3'-NUCLEOTIDASE SURE"/>
    <property type="match status" value="1"/>
</dbReference>
<dbReference type="Pfam" id="PF01975">
    <property type="entry name" value="SurE"/>
    <property type="match status" value="1"/>
</dbReference>
<dbReference type="SUPFAM" id="SSF64167">
    <property type="entry name" value="SurE-like"/>
    <property type="match status" value="1"/>
</dbReference>
<protein>
    <recommendedName>
        <fullName evidence="1">5'-nucleotidase SurE</fullName>
        <ecNumber evidence="1">3.1.3.5</ecNumber>
    </recommendedName>
    <alternativeName>
        <fullName evidence="1">Nucleoside 5'-monophosphate phosphohydrolase</fullName>
    </alternativeName>
</protein>
<organism>
    <name type="scientific">Chlamydia trachomatis serovar A (strain ATCC VR-571B / DSM 19440 / HAR-13)</name>
    <dbReference type="NCBI Taxonomy" id="315277"/>
    <lineage>
        <taxon>Bacteria</taxon>
        <taxon>Pseudomonadati</taxon>
        <taxon>Chlamydiota</taxon>
        <taxon>Chlamydiia</taxon>
        <taxon>Chlamydiales</taxon>
        <taxon>Chlamydiaceae</taxon>
        <taxon>Chlamydia/Chlamydophila group</taxon>
        <taxon>Chlamydia</taxon>
    </lineage>
</organism>
<gene>
    <name evidence="1" type="primary">surE</name>
    <name type="ordered locus">CTA_0238</name>
</gene>
<sequence>MTEIRRLRILITNDDGIKAKGISLLISLLREADFADLYIVAPLEEQSGRSMAFSLVEPTTLEPFDYPQRVQEAWAVTGTPVDCVKLAIGELFKENALDLILSGINNGKNSGRCLYYSATVGAIREANLHGIPAIALSQSENIAFFQEAHMASLIRSLCEFTVAYKHTDPLGLNVNFPASTDDSPWKGIRFTLSGNEFLFGIPRLVRTEGNRRYYTLYDMRDKVSEEFSEEYLALANNYISAAPLVSKNTPRATLSEEELAFLKDSFEQSVLWKASLNLEEDLA</sequence>
<evidence type="ECO:0000255" key="1">
    <source>
        <dbReference type="HAMAP-Rule" id="MF_00060"/>
    </source>
</evidence>
<proteinExistence type="inferred from homology"/>
<accession>Q3KME4</accession>
<keyword id="KW-0963">Cytoplasm</keyword>
<keyword id="KW-0378">Hydrolase</keyword>
<keyword id="KW-0479">Metal-binding</keyword>
<keyword id="KW-0547">Nucleotide-binding</keyword>
<name>SURE_CHLTA</name>
<feature type="chain" id="PRO_0000235604" description="5'-nucleotidase SurE">
    <location>
        <begin position="1"/>
        <end position="283"/>
    </location>
</feature>
<feature type="binding site" evidence="1">
    <location>
        <position position="14"/>
    </location>
    <ligand>
        <name>a divalent metal cation</name>
        <dbReference type="ChEBI" id="CHEBI:60240"/>
    </ligand>
</feature>
<feature type="binding site" evidence="1">
    <location>
        <position position="15"/>
    </location>
    <ligand>
        <name>a divalent metal cation</name>
        <dbReference type="ChEBI" id="CHEBI:60240"/>
    </ligand>
</feature>
<feature type="binding site" evidence="1">
    <location>
        <position position="47"/>
    </location>
    <ligand>
        <name>a divalent metal cation</name>
        <dbReference type="ChEBI" id="CHEBI:60240"/>
    </ligand>
</feature>
<feature type="binding site" evidence="1">
    <location>
        <position position="105"/>
    </location>
    <ligand>
        <name>a divalent metal cation</name>
        <dbReference type="ChEBI" id="CHEBI:60240"/>
    </ligand>
</feature>
<comment type="function">
    <text evidence="1">Nucleotidase that shows phosphatase activity on nucleoside 5'-monophosphates.</text>
</comment>
<comment type="catalytic activity">
    <reaction evidence="1">
        <text>a ribonucleoside 5'-phosphate + H2O = a ribonucleoside + phosphate</text>
        <dbReference type="Rhea" id="RHEA:12484"/>
        <dbReference type="ChEBI" id="CHEBI:15377"/>
        <dbReference type="ChEBI" id="CHEBI:18254"/>
        <dbReference type="ChEBI" id="CHEBI:43474"/>
        <dbReference type="ChEBI" id="CHEBI:58043"/>
        <dbReference type="EC" id="3.1.3.5"/>
    </reaction>
</comment>
<comment type="cofactor">
    <cofactor evidence="1">
        <name>a divalent metal cation</name>
        <dbReference type="ChEBI" id="CHEBI:60240"/>
    </cofactor>
    <text evidence="1">Binds 1 divalent metal cation per subunit.</text>
</comment>
<comment type="subcellular location">
    <subcellularLocation>
        <location evidence="1">Cytoplasm</location>
    </subcellularLocation>
</comment>
<comment type="similarity">
    <text evidence="1">Belongs to the SurE nucleotidase family.</text>
</comment>